<gene>
    <name evidence="1" type="primary">ruvC</name>
    <name type="ordered locus">sync_0961</name>
</gene>
<accession>Q0IBJ8</accession>
<evidence type="ECO:0000255" key="1">
    <source>
        <dbReference type="HAMAP-Rule" id="MF_00034"/>
    </source>
</evidence>
<comment type="function">
    <text evidence="1">The RuvA-RuvB-RuvC complex processes Holliday junction (HJ) DNA during genetic recombination and DNA repair. Endonuclease that resolves HJ intermediates. Cleaves cruciform DNA by making single-stranded nicks across the HJ at symmetrical positions within the homologous arms, yielding a 5'-phosphate and a 3'-hydroxyl group; requires a central core of homology in the junction. The consensus cleavage sequence is 5'-(A/T)TT(C/G)-3'. Cleavage occurs on the 3'-side of the TT dinucleotide at the point of strand exchange. HJ branch migration catalyzed by RuvA-RuvB allows RuvC to scan DNA until it finds its consensus sequence, where it cleaves and resolves the cruciform DNA.</text>
</comment>
<comment type="catalytic activity">
    <reaction evidence="1">
        <text>Endonucleolytic cleavage at a junction such as a reciprocal single-stranded crossover between two homologous DNA duplexes (Holliday junction).</text>
        <dbReference type="EC" id="3.1.21.10"/>
    </reaction>
</comment>
<comment type="cofactor">
    <cofactor evidence="1">
        <name>Mg(2+)</name>
        <dbReference type="ChEBI" id="CHEBI:18420"/>
    </cofactor>
    <text evidence="1">Binds 2 Mg(2+) ion per subunit.</text>
</comment>
<comment type="subunit">
    <text evidence="1">Homodimer which binds Holliday junction (HJ) DNA. The HJ becomes 2-fold symmetrical on binding to RuvC with unstacked arms; it has a different conformation from HJ DNA in complex with RuvA. In the full resolvosome a probable DNA-RuvA(4)-RuvB(12)-RuvC(2) complex forms which resolves the HJ.</text>
</comment>
<comment type="subcellular location">
    <subcellularLocation>
        <location evidence="1">Cytoplasm</location>
    </subcellularLocation>
</comment>
<comment type="similarity">
    <text evidence="1">Belongs to the RuvC family.</text>
</comment>
<sequence>MRILGIDPGLARVGYGVIDVEPRKGKQEGSQRMIDCGIIRTDPGRSEGERMVEIARDLRQIIRIHQPELASVEKFFFYRSSNTIAVVQARGVLIMTLARFGLPIVEFPPMQIKQALTGHGHADKDEVLEAVMRELNLDTPPRPDDAADALAVALTGWFQH</sequence>
<reference key="1">
    <citation type="journal article" date="2006" name="Proc. Natl. Acad. Sci. U.S.A.">
        <title>Genome sequence of Synechococcus CC9311: insights into adaptation to a coastal environment.</title>
        <authorList>
            <person name="Palenik B."/>
            <person name="Ren Q."/>
            <person name="Dupont C.L."/>
            <person name="Myers G.S."/>
            <person name="Heidelberg J.F."/>
            <person name="Badger J.H."/>
            <person name="Madupu R."/>
            <person name="Nelson W.C."/>
            <person name="Brinkac L.M."/>
            <person name="Dodson R.J."/>
            <person name="Durkin A.S."/>
            <person name="Daugherty S.C."/>
            <person name="Sullivan S.A."/>
            <person name="Khouri H."/>
            <person name="Mohamoud Y."/>
            <person name="Halpin R."/>
            <person name="Paulsen I.T."/>
        </authorList>
    </citation>
    <scope>NUCLEOTIDE SEQUENCE [LARGE SCALE GENOMIC DNA]</scope>
    <source>
        <strain>CC9311</strain>
    </source>
</reference>
<name>RUVC_SYNS3</name>
<dbReference type="EC" id="3.1.21.10" evidence="1"/>
<dbReference type="EMBL" id="CP000435">
    <property type="protein sequence ID" value="ABI45539.1"/>
    <property type="molecule type" value="Genomic_DNA"/>
</dbReference>
<dbReference type="RefSeq" id="WP_011618896.1">
    <property type="nucleotide sequence ID" value="NC_008319.1"/>
</dbReference>
<dbReference type="SMR" id="Q0IBJ8"/>
<dbReference type="STRING" id="64471.sync_0961"/>
<dbReference type="KEGG" id="syg:sync_0961"/>
<dbReference type="eggNOG" id="COG0817">
    <property type="taxonomic scope" value="Bacteria"/>
</dbReference>
<dbReference type="HOGENOM" id="CLU_091257_3_1_3"/>
<dbReference type="OrthoDB" id="9805499at2"/>
<dbReference type="Proteomes" id="UP000001961">
    <property type="component" value="Chromosome"/>
</dbReference>
<dbReference type="GO" id="GO:0005737">
    <property type="term" value="C:cytoplasm"/>
    <property type="evidence" value="ECO:0007669"/>
    <property type="project" value="UniProtKB-SubCell"/>
</dbReference>
<dbReference type="GO" id="GO:0048476">
    <property type="term" value="C:Holliday junction resolvase complex"/>
    <property type="evidence" value="ECO:0007669"/>
    <property type="project" value="UniProtKB-UniRule"/>
</dbReference>
<dbReference type="GO" id="GO:0008821">
    <property type="term" value="F:crossover junction DNA endonuclease activity"/>
    <property type="evidence" value="ECO:0007669"/>
    <property type="project" value="UniProtKB-UniRule"/>
</dbReference>
<dbReference type="GO" id="GO:0003677">
    <property type="term" value="F:DNA binding"/>
    <property type="evidence" value="ECO:0007669"/>
    <property type="project" value="UniProtKB-KW"/>
</dbReference>
<dbReference type="GO" id="GO:0000287">
    <property type="term" value="F:magnesium ion binding"/>
    <property type="evidence" value="ECO:0007669"/>
    <property type="project" value="UniProtKB-UniRule"/>
</dbReference>
<dbReference type="GO" id="GO:0006310">
    <property type="term" value="P:DNA recombination"/>
    <property type="evidence" value="ECO:0007669"/>
    <property type="project" value="UniProtKB-UniRule"/>
</dbReference>
<dbReference type="GO" id="GO:0006281">
    <property type="term" value="P:DNA repair"/>
    <property type="evidence" value="ECO:0007669"/>
    <property type="project" value="UniProtKB-UniRule"/>
</dbReference>
<dbReference type="CDD" id="cd16962">
    <property type="entry name" value="RuvC"/>
    <property type="match status" value="1"/>
</dbReference>
<dbReference type="FunFam" id="3.30.420.10:FF:000002">
    <property type="entry name" value="Crossover junction endodeoxyribonuclease RuvC"/>
    <property type="match status" value="1"/>
</dbReference>
<dbReference type="Gene3D" id="3.30.420.10">
    <property type="entry name" value="Ribonuclease H-like superfamily/Ribonuclease H"/>
    <property type="match status" value="1"/>
</dbReference>
<dbReference type="HAMAP" id="MF_00034">
    <property type="entry name" value="RuvC"/>
    <property type="match status" value="1"/>
</dbReference>
<dbReference type="InterPro" id="IPR012337">
    <property type="entry name" value="RNaseH-like_sf"/>
</dbReference>
<dbReference type="InterPro" id="IPR036397">
    <property type="entry name" value="RNaseH_sf"/>
</dbReference>
<dbReference type="InterPro" id="IPR020563">
    <property type="entry name" value="X-over_junc_endoDNase_Mg_BS"/>
</dbReference>
<dbReference type="InterPro" id="IPR002176">
    <property type="entry name" value="X-over_junc_endoDNase_RuvC"/>
</dbReference>
<dbReference type="NCBIfam" id="NF000711">
    <property type="entry name" value="PRK00039.2-1"/>
    <property type="match status" value="1"/>
</dbReference>
<dbReference type="PANTHER" id="PTHR30194">
    <property type="entry name" value="CROSSOVER JUNCTION ENDODEOXYRIBONUCLEASE RUVC"/>
    <property type="match status" value="1"/>
</dbReference>
<dbReference type="PANTHER" id="PTHR30194:SF3">
    <property type="entry name" value="CROSSOVER JUNCTION ENDODEOXYRIBONUCLEASE RUVC"/>
    <property type="match status" value="1"/>
</dbReference>
<dbReference type="Pfam" id="PF02075">
    <property type="entry name" value="RuvC"/>
    <property type="match status" value="1"/>
</dbReference>
<dbReference type="PRINTS" id="PR00696">
    <property type="entry name" value="RSOLVASERUVC"/>
</dbReference>
<dbReference type="SUPFAM" id="SSF53098">
    <property type="entry name" value="Ribonuclease H-like"/>
    <property type="match status" value="1"/>
</dbReference>
<dbReference type="PROSITE" id="PS01321">
    <property type="entry name" value="RUVC"/>
    <property type="match status" value="1"/>
</dbReference>
<protein>
    <recommendedName>
        <fullName evidence="1">Crossover junction endodeoxyribonuclease RuvC</fullName>
        <ecNumber evidence="1">3.1.21.10</ecNumber>
    </recommendedName>
    <alternativeName>
        <fullName evidence="1">Holliday junction nuclease RuvC</fullName>
    </alternativeName>
    <alternativeName>
        <fullName evidence="1">Holliday junction resolvase RuvC</fullName>
    </alternativeName>
</protein>
<organism>
    <name type="scientific">Synechococcus sp. (strain CC9311)</name>
    <dbReference type="NCBI Taxonomy" id="64471"/>
    <lineage>
        <taxon>Bacteria</taxon>
        <taxon>Bacillati</taxon>
        <taxon>Cyanobacteriota</taxon>
        <taxon>Cyanophyceae</taxon>
        <taxon>Synechococcales</taxon>
        <taxon>Synechococcaceae</taxon>
        <taxon>Synechococcus</taxon>
    </lineage>
</organism>
<keyword id="KW-0963">Cytoplasm</keyword>
<keyword id="KW-0227">DNA damage</keyword>
<keyword id="KW-0233">DNA recombination</keyword>
<keyword id="KW-0234">DNA repair</keyword>
<keyword id="KW-0238">DNA-binding</keyword>
<keyword id="KW-0255">Endonuclease</keyword>
<keyword id="KW-0378">Hydrolase</keyword>
<keyword id="KW-0460">Magnesium</keyword>
<keyword id="KW-0479">Metal-binding</keyword>
<keyword id="KW-0540">Nuclease</keyword>
<keyword id="KW-1185">Reference proteome</keyword>
<proteinExistence type="inferred from homology"/>
<feature type="chain" id="PRO_1000002844" description="Crossover junction endodeoxyribonuclease RuvC">
    <location>
        <begin position="1"/>
        <end position="160"/>
    </location>
</feature>
<feature type="active site" evidence="1">
    <location>
        <position position="7"/>
    </location>
</feature>
<feature type="active site" evidence="1">
    <location>
        <position position="73"/>
    </location>
</feature>
<feature type="active site" evidence="1">
    <location>
        <position position="145"/>
    </location>
</feature>
<feature type="binding site" evidence="1">
    <location>
        <position position="7"/>
    </location>
    <ligand>
        <name>Mg(2+)</name>
        <dbReference type="ChEBI" id="CHEBI:18420"/>
        <label>1</label>
    </ligand>
</feature>
<feature type="binding site" evidence="1">
    <location>
        <position position="73"/>
    </location>
    <ligand>
        <name>Mg(2+)</name>
        <dbReference type="ChEBI" id="CHEBI:18420"/>
        <label>2</label>
    </ligand>
</feature>
<feature type="binding site" evidence="1">
    <location>
        <position position="145"/>
    </location>
    <ligand>
        <name>Mg(2+)</name>
        <dbReference type="ChEBI" id="CHEBI:18420"/>
        <label>1</label>
    </ligand>
</feature>